<gene>
    <name evidence="1" type="primary">pncB</name>
    <name type="ordered locus">RHE_CH00181</name>
</gene>
<evidence type="ECO:0000255" key="1">
    <source>
        <dbReference type="HAMAP-Rule" id="MF_00570"/>
    </source>
</evidence>
<dbReference type="EC" id="6.3.4.21" evidence="1"/>
<dbReference type="EMBL" id="CP000133">
    <property type="protein sequence ID" value="ABC89006.1"/>
    <property type="molecule type" value="Genomic_DNA"/>
</dbReference>
<dbReference type="RefSeq" id="WP_011423575.1">
    <property type="nucleotide sequence ID" value="NC_007761.1"/>
</dbReference>
<dbReference type="SMR" id="Q2KDT0"/>
<dbReference type="KEGG" id="ret:RHE_CH00181"/>
<dbReference type="eggNOG" id="COG1488">
    <property type="taxonomic scope" value="Bacteria"/>
</dbReference>
<dbReference type="HOGENOM" id="CLU_030991_1_0_5"/>
<dbReference type="OrthoDB" id="9771406at2"/>
<dbReference type="UniPathway" id="UPA00253">
    <property type="reaction ID" value="UER00457"/>
</dbReference>
<dbReference type="Proteomes" id="UP000001936">
    <property type="component" value="Chromosome"/>
</dbReference>
<dbReference type="GO" id="GO:0005829">
    <property type="term" value="C:cytosol"/>
    <property type="evidence" value="ECO:0007669"/>
    <property type="project" value="TreeGrafter"/>
</dbReference>
<dbReference type="GO" id="GO:0004516">
    <property type="term" value="F:nicotinate phosphoribosyltransferase activity"/>
    <property type="evidence" value="ECO:0007669"/>
    <property type="project" value="UniProtKB-UniRule"/>
</dbReference>
<dbReference type="GO" id="GO:0034355">
    <property type="term" value="P:NAD biosynthetic process via the salvage pathway"/>
    <property type="evidence" value="ECO:0007669"/>
    <property type="project" value="TreeGrafter"/>
</dbReference>
<dbReference type="Gene3D" id="3.20.140.10">
    <property type="entry name" value="nicotinate phosphoribosyltransferase"/>
    <property type="match status" value="1"/>
</dbReference>
<dbReference type="HAMAP" id="MF_00570">
    <property type="entry name" value="NAPRTase"/>
    <property type="match status" value="1"/>
</dbReference>
<dbReference type="InterPro" id="IPR041525">
    <property type="entry name" value="N/Namide_PRibTrfase"/>
</dbReference>
<dbReference type="InterPro" id="IPR040727">
    <property type="entry name" value="NAPRTase_N"/>
</dbReference>
<dbReference type="InterPro" id="IPR006406">
    <property type="entry name" value="Nic_PRibTrfase"/>
</dbReference>
<dbReference type="InterPro" id="IPR007229">
    <property type="entry name" value="Nic_PRibTrfase-Fam"/>
</dbReference>
<dbReference type="InterPro" id="IPR036068">
    <property type="entry name" value="Nicotinate_pribotase-like_C"/>
</dbReference>
<dbReference type="NCBIfam" id="TIGR01514">
    <property type="entry name" value="NAPRTase"/>
    <property type="match status" value="1"/>
</dbReference>
<dbReference type="NCBIfam" id="NF003704">
    <property type="entry name" value="PRK05321.1"/>
    <property type="match status" value="1"/>
</dbReference>
<dbReference type="PANTHER" id="PTHR11098">
    <property type="entry name" value="NICOTINATE PHOSPHORIBOSYLTRANSFERASE"/>
    <property type="match status" value="1"/>
</dbReference>
<dbReference type="PANTHER" id="PTHR11098:SF1">
    <property type="entry name" value="NICOTINATE PHOSPHORIBOSYLTRANSFERASE"/>
    <property type="match status" value="1"/>
</dbReference>
<dbReference type="Pfam" id="PF04095">
    <property type="entry name" value="NAPRTase"/>
    <property type="match status" value="1"/>
</dbReference>
<dbReference type="Pfam" id="PF17767">
    <property type="entry name" value="NAPRTase_N"/>
    <property type="match status" value="1"/>
</dbReference>
<dbReference type="PIRSF" id="PIRSF000484">
    <property type="entry name" value="NAPRT"/>
    <property type="match status" value="1"/>
</dbReference>
<dbReference type="SUPFAM" id="SSF51690">
    <property type="entry name" value="Nicotinate/Quinolinate PRTase C-terminal domain-like"/>
    <property type="match status" value="1"/>
</dbReference>
<dbReference type="SUPFAM" id="SSF54675">
    <property type="entry name" value="Nicotinate/Quinolinate PRTase N-terminal domain-like"/>
    <property type="match status" value="1"/>
</dbReference>
<proteinExistence type="inferred from homology"/>
<protein>
    <recommendedName>
        <fullName evidence="1">Nicotinate phosphoribosyltransferase</fullName>
        <shortName evidence="1">NAPRTase</shortName>
        <ecNumber evidence="1">6.3.4.21</ecNumber>
    </recommendedName>
</protein>
<organism>
    <name type="scientific">Rhizobium etli (strain ATCC 51251 / DSM 11541 / JCM 21823 / NBRC 15573 / CFN 42)</name>
    <dbReference type="NCBI Taxonomy" id="347834"/>
    <lineage>
        <taxon>Bacteria</taxon>
        <taxon>Pseudomonadati</taxon>
        <taxon>Pseudomonadota</taxon>
        <taxon>Alphaproteobacteria</taxon>
        <taxon>Hyphomicrobiales</taxon>
        <taxon>Rhizobiaceae</taxon>
        <taxon>Rhizobium/Agrobacterium group</taxon>
        <taxon>Rhizobium</taxon>
    </lineage>
</organism>
<name>PNCB_RHIEC</name>
<keyword id="KW-0436">Ligase</keyword>
<keyword id="KW-0597">Phosphoprotein</keyword>
<keyword id="KW-0662">Pyridine nucleotide biosynthesis</keyword>
<keyword id="KW-1185">Reference proteome</keyword>
<sequence length="434" mass="49459">MAKTDIARRVYNHAWKLDPIIRSLIDTDFYKLLMLQMIWKLYPDVNASFTLINRTKRVHLAEEIDEGDLREQLDHARTLRLSKKEMIWLAGNSFYGRAQIFEPEFLAWLSNFQLPEYELSKKDGQYVLDFHGSWKETTMWEIPALAIVNELRSRSAMKALGPFTLDVLYARAKAKMWSKVERLKELPGLRISDFGTRRRHSFLWQRWCVEALKEGIGPAFTGTSNVLLAMDSDLEAVGTNAHELPMVAAALAQTDEQLRNAPYKILRDWNKLYGGNLLIVLPDAFGTAAFLRDAPEWVADWTGFRPDSAPPIEGGEKIIDWWKKMGRDPRQKLLIFSDGLDVDAIIDTYRHFEGRVRMSFGWGTNLTNDFAGCAPTEISGLNPISIVCKVSDANGRPAVKLSDNPQKATGEPAEVERYLKFFGAEDRVDQTVLV</sequence>
<feature type="chain" id="PRO_1000025010" description="Nicotinate phosphoribosyltransferase">
    <location>
        <begin position="1"/>
        <end position="434"/>
    </location>
</feature>
<feature type="modified residue" description="Phosphohistidine; by autocatalysis" evidence="1">
    <location>
        <position position="242"/>
    </location>
</feature>
<comment type="function">
    <text evidence="1">Catalyzes the synthesis of beta-nicotinate D-ribonucleotide from nicotinate and 5-phospho-D-ribose 1-phosphate at the expense of ATP.</text>
</comment>
<comment type="catalytic activity">
    <reaction evidence="1">
        <text>nicotinate + 5-phospho-alpha-D-ribose 1-diphosphate + ATP + H2O = nicotinate beta-D-ribonucleotide + ADP + phosphate + diphosphate</text>
        <dbReference type="Rhea" id="RHEA:36163"/>
        <dbReference type="ChEBI" id="CHEBI:15377"/>
        <dbReference type="ChEBI" id="CHEBI:30616"/>
        <dbReference type="ChEBI" id="CHEBI:32544"/>
        <dbReference type="ChEBI" id="CHEBI:33019"/>
        <dbReference type="ChEBI" id="CHEBI:43474"/>
        <dbReference type="ChEBI" id="CHEBI:57502"/>
        <dbReference type="ChEBI" id="CHEBI:58017"/>
        <dbReference type="ChEBI" id="CHEBI:456216"/>
        <dbReference type="EC" id="6.3.4.21"/>
    </reaction>
</comment>
<comment type="pathway">
    <text evidence="1">Cofactor biosynthesis; NAD(+) biosynthesis; nicotinate D-ribonucleotide from nicotinate: step 1/1.</text>
</comment>
<comment type="PTM">
    <text evidence="1">Transiently phosphorylated on a His residue during the reaction cycle. Phosphorylation strongly increases the affinity for substrates and increases the rate of nicotinate D-ribonucleotide production. Dephosphorylation regenerates the low-affinity form of the enzyme, leading to product release.</text>
</comment>
<comment type="similarity">
    <text evidence="1">Belongs to the NAPRTase family.</text>
</comment>
<reference key="1">
    <citation type="journal article" date="2006" name="Proc. Natl. Acad. Sci. U.S.A.">
        <title>The partitioned Rhizobium etli genome: genetic and metabolic redundancy in seven interacting replicons.</title>
        <authorList>
            <person name="Gonzalez V."/>
            <person name="Santamaria R.I."/>
            <person name="Bustos P."/>
            <person name="Hernandez-Gonzalez I."/>
            <person name="Medrano-Soto A."/>
            <person name="Moreno-Hagelsieb G."/>
            <person name="Janga S.C."/>
            <person name="Ramirez M.A."/>
            <person name="Jimenez-Jacinto V."/>
            <person name="Collado-Vides J."/>
            <person name="Davila G."/>
        </authorList>
    </citation>
    <scope>NUCLEOTIDE SEQUENCE [LARGE SCALE GENOMIC DNA]</scope>
    <source>
        <strain>ATCC 51251 / DSM 11541 / JCM 21823 / NBRC 15573 / CFN 42</strain>
    </source>
</reference>
<accession>Q2KDT0</accession>